<name>G6PT3_MOUSE</name>
<accession>Q9WU81</accession>
<accession>Q571N8</accession>
<accession>Q6P4P0</accession>
<accession>Q8BV90</accession>
<accession>Q8C144</accession>
<accession>Q8R1Y0</accession>
<comment type="function">
    <text evidence="1">Inorganic phosphate and glucose-6-phosphate antiporter. May transport cytoplasmic glucose-6-phosphate into the lumen of the endoplasmic reticulum and translocate inorganic phosphate into the opposite direction. Independent of a lumenal glucose-6-phosphatase. May not play a role in homeostatic regulation of blood glucose levels.</text>
</comment>
<comment type="catalytic activity">
    <reaction evidence="1">
        <text>D-glucose 6-phosphate(in) + phosphate(out) = D-glucose 6-phosphate(out) + phosphate(in)</text>
        <dbReference type="Rhea" id="RHEA:71535"/>
        <dbReference type="ChEBI" id="CHEBI:43474"/>
        <dbReference type="ChEBI" id="CHEBI:61548"/>
    </reaction>
</comment>
<comment type="activity regulation">
    <text evidence="1">Inhibited by vanadate but not by chlorogenic acid.</text>
</comment>
<comment type="subcellular location">
    <subcellularLocation>
        <location evidence="1">Endoplasmic reticulum membrane</location>
        <topology evidence="2">Multi-pass membrane protein</topology>
    </subcellularLocation>
</comment>
<comment type="alternative products">
    <event type="alternative splicing"/>
    <isoform>
        <id>Q9WU81-1</id>
        <name>1</name>
        <sequence type="displayed"/>
    </isoform>
    <isoform>
        <id>Q9WU81-2</id>
        <name>2</name>
        <sequence type="described" ref="VSP_028964"/>
    </isoform>
</comment>
<comment type="tissue specificity">
    <text evidence="4">Highly expressed in bone marrow derived macrophages, and weakly in spleen.</text>
</comment>
<comment type="induction">
    <text evidence="4">Up-regulated by cAMP in macrophages.</text>
</comment>
<comment type="similarity">
    <text evidence="9">Belongs to the major facilitator superfamily. Organophosphate:Pi antiporter (OPA) (TC 2.A.1.4) family.</text>
</comment>
<comment type="sequence caution" evidence="9">
    <conflict type="frameshift">
        <sequence resource="EMBL-CDS" id="BAD90337"/>
    </conflict>
</comment>
<keyword id="KW-0025">Alternative splicing</keyword>
<keyword id="KW-0050">Antiport</keyword>
<keyword id="KW-0256">Endoplasmic reticulum</keyword>
<keyword id="KW-0325">Glycoprotein</keyword>
<keyword id="KW-0472">Membrane</keyword>
<keyword id="KW-1185">Reference proteome</keyword>
<keyword id="KW-0762">Sugar transport</keyword>
<keyword id="KW-0812">Transmembrane</keyword>
<keyword id="KW-1133">Transmembrane helix</keyword>
<keyword id="KW-0813">Transport</keyword>
<protein>
    <recommendedName>
        <fullName evidence="9">Glucose-6-phosphate exchanger SLC37A2</fullName>
    </recommendedName>
    <alternativeName>
        <fullName evidence="10">Solute carrier family 37 member 2</fullName>
    </alternativeName>
    <alternativeName>
        <fullName evidence="5">cAMP-inducible protein 2</fullName>
    </alternativeName>
</protein>
<gene>
    <name evidence="10" type="primary">Slc37a2</name>
    <name evidence="5" type="synonym">Ci2</name>
</gene>
<organism>
    <name type="scientific">Mus musculus</name>
    <name type="common">Mouse</name>
    <dbReference type="NCBI Taxonomy" id="10090"/>
    <lineage>
        <taxon>Eukaryota</taxon>
        <taxon>Metazoa</taxon>
        <taxon>Chordata</taxon>
        <taxon>Craniata</taxon>
        <taxon>Vertebrata</taxon>
        <taxon>Euteleostomi</taxon>
        <taxon>Mammalia</taxon>
        <taxon>Eutheria</taxon>
        <taxon>Euarchontoglires</taxon>
        <taxon>Glires</taxon>
        <taxon>Rodentia</taxon>
        <taxon>Myomorpha</taxon>
        <taxon>Muroidea</taxon>
        <taxon>Muridae</taxon>
        <taxon>Murinae</taxon>
        <taxon>Mus</taxon>
        <taxon>Mus</taxon>
    </lineage>
</organism>
<dbReference type="EMBL" id="AF121081">
    <property type="protein sequence ID" value="AAD24571.1"/>
    <property type="molecule type" value="mRNA"/>
</dbReference>
<dbReference type="EMBL" id="AK028984">
    <property type="protein sequence ID" value="BAC26224.1"/>
    <property type="molecule type" value="mRNA"/>
</dbReference>
<dbReference type="EMBL" id="AK031045">
    <property type="protein sequence ID" value="BAC27227.1"/>
    <property type="molecule type" value="mRNA"/>
</dbReference>
<dbReference type="EMBL" id="AK079414">
    <property type="protein sequence ID" value="BAC37639.1"/>
    <property type="molecule type" value="mRNA"/>
</dbReference>
<dbReference type="EMBL" id="AK079823">
    <property type="protein sequence ID" value="BAC37758.1"/>
    <property type="molecule type" value="mRNA"/>
</dbReference>
<dbReference type="EMBL" id="BC022752">
    <property type="protein sequence ID" value="AAH22752.1"/>
    <property type="molecule type" value="mRNA"/>
</dbReference>
<dbReference type="EMBL" id="BC063326">
    <property type="protein sequence ID" value="AAH63326.1"/>
    <property type="molecule type" value="mRNA"/>
</dbReference>
<dbReference type="EMBL" id="AK220151">
    <property type="protein sequence ID" value="BAD90337.1"/>
    <property type="status" value="ALT_FRAME"/>
    <property type="molecule type" value="mRNA"/>
</dbReference>
<dbReference type="CCDS" id="CCDS40582.1">
    <molecule id="Q9WU81-1"/>
</dbReference>
<dbReference type="CCDS" id="CCDS52769.1">
    <molecule id="Q9WU81-2"/>
</dbReference>
<dbReference type="RefSeq" id="NP_001139432.1">
    <molecule id="Q9WU81-2"/>
    <property type="nucleotide sequence ID" value="NM_001145960.2"/>
</dbReference>
<dbReference type="RefSeq" id="NP_064654.3">
    <molecule id="Q9WU81-1"/>
    <property type="nucleotide sequence ID" value="NM_020258.4"/>
</dbReference>
<dbReference type="SMR" id="Q9WU81"/>
<dbReference type="FunCoup" id="Q9WU81">
    <property type="interactions" value="434"/>
</dbReference>
<dbReference type="STRING" id="10090.ENSMUSP00000124569"/>
<dbReference type="GlyCosmos" id="Q9WU81">
    <property type="glycosylation" value="3 sites, No reported glycans"/>
</dbReference>
<dbReference type="GlyGen" id="Q9WU81">
    <property type="glycosylation" value="3 sites"/>
</dbReference>
<dbReference type="iPTMnet" id="Q9WU81"/>
<dbReference type="PhosphoSitePlus" id="Q9WU81"/>
<dbReference type="SwissPalm" id="Q9WU81"/>
<dbReference type="jPOST" id="Q9WU81"/>
<dbReference type="PaxDb" id="10090-ENSMUSP00000124569"/>
<dbReference type="PeptideAtlas" id="Q9WU81"/>
<dbReference type="ProteomicsDB" id="272929">
    <molecule id="Q9WU81-1"/>
</dbReference>
<dbReference type="ProteomicsDB" id="272930">
    <molecule id="Q9WU81-2"/>
</dbReference>
<dbReference type="Antibodypedia" id="19052">
    <property type="antibodies" value="110 antibodies from 27 providers"/>
</dbReference>
<dbReference type="DNASU" id="56857"/>
<dbReference type="Ensembl" id="ENSMUST00000115068.10">
    <molecule id="Q9WU81-1"/>
    <property type="protein sequence ID" value="ENSMUSP00000110720.3"/>
    <property type="gene ID" value="ENSMUSG00000032122.16"/>
</dbReference>
<dbReference type="Ensembl" id="ENSMUST00000161114.2">
    <molecule id="Q9WU81-2"/>
    <property type="protein sequence ID" value="ENSMUSP00000124569.2"/>
    <property type="gene ID" value="ENSMUSG00000032122.16"/>
</dbReference>
<dbReference type="GeneID" id="56857"/>
<dbReference type="KEGG" id="mmu:56857"/>
<dbReference type="UCSC" id="uc009ouk.2">
    <molecule id="Q9WU81-1"/>
    <property type="organism name" value="mouse"/>
</dbReference>
<dbReference type="UCSC" id="uc009oul.2">
    <molecule id="Q9WU81-2"/>
    <property type="organism name" value="mouse"/>
</dbReference>
<dbReference type="AGR" id="MGI:1929693"/>
<dbReference type="CTD" id="219855"/>
<dbReference type="MGI" id="MGI:1929693">
    <property type="gene designation" value="Slc37a2"/>
</dbReference>
<dbReference type="VEuPathDB" id="HostDB:ENSMUSG00000032122"/>
<dbReference type="eggNOG" id="KOG2533">
    <property type="taxonomic scope" value="Eukaryota"/>
</dbReference>
<dbReference type="GeneTree" id="ENSGT00940000158657"/>
<dbReference type="HOGENOM" id="CLU_001265_31_6_1"/>
<dbReference type="InParanoid" id="Q9WU81"/>
<dbReference type="OMA" id="AMPYLID"/>
<dbReference type="OrthoDB" id="38378at9989"/>
<dbReference type="PhylomeDB" id="Q9WU81"/>
<dbReference type="TreeFam" id="TF314991"/>
<dbReference type="Reactome" id="R-MMU-70263">
    <property type="pathway name" value="Gluconeogenesis"/>
</dbReference>
<dbReference type="BioGRID-ORCS" id="56857">
    <property type="hits" value="5 hits in 80 CRISPR screens"/>
</dbReference>
<dbReference type="ChiTaRS" id="Slc37a2">
    <property type="organism name" value="mouse"/>
</dbReference>
<dbReference type="PRO" id="PR:Q9WU81"/>
<dbReference type="Proteomes" id="UP000000589">
    <property type="component" value="Chromosome 9"/>
</dbReference>
<dbReference type="RNAct" id="Q9WU81">
    <property type="molecule type" value="protein"/>
</dbReference>
<dbReference type="Bgee" id="ENSMUSG00000032122">
    <property type="expression patterns" value="Expressed in parotid gland and 113 other cell types or tissues"/>
</dbReference>
<dbReference type="GO" id="GO:0005789">
    <property type="term" value="C:endoplasmic reticulum membrane"/>
    <property type="evidence" value="ECO:0000250"/>
    <property type="project" value="UniProtKB"/>
</dbReference>
<dbReference type="GO" id="GO:0061513">
    <property type="term" value="F:glucose 6-phosphate:phosphate antiporter activity"/>
    <property type="evidence" value="ECO:0000250"/>
    <property type="project" value="UniProtKB"/>
</dbReference>
<dbReference type="GO" id="GO:0015169">
    <property type="term" value="F:glycerol-3-phosphate transmembrane transporter activity"/>
    <property type="evidence" value="ECO:0000247"/>
    <property type="project" value="MGI"/>
</dbReference>
<dbReference type="GO" id="GO:0015760">
    <property type="term" value="P:glucose-6-phosphate transport"/>
    <property type="evidence" value="ECO:0000250"/>
    <property type="project" value="UniProtKB"/>
</dbReference>
<dbReference type="GO" id="GO:0006072">
    <property type="term" value="P:glycerol-3-phosphate metabolic process"/>
    <property type="evidence" value="ECO:0000247"/>
    <property type="project" value="MGI"/>
</dbReference>
<dbReference type="GO" id="GO:0006127">
    <property type="term" value="P:glycerol-3-phosphate shuttle"/>
    <property type="evidence" value="ECO:0000247"/>
    <property type="project" value="MGI"/>
</dbReference>
<dbReference type="GO" id="GO:0015794">
    <property type="term" value="P:glycerol-3-phosphate transmembrane transport"/>
    <property type="evidence" value="ECO:0000247"/>
    <property type="project" value="MGI"/>
</dbReference>
<dbReference type="GO" id="GO:0035435">
    <property type="term" value="P:phosphate ion transmembrane transport"/>
    <property type="evidence" value="ECO:0000250"/>
    <property type="project" value="UniProtKB"/>
</dbReference>
<dbReference type="CDD" id="cd17344">
    <property type="entry name" value="MFS_SLC37A1_2"/>
    <property type="match status" value="1"/>
</dbReference>
<dbReference type="FunFam" id="1.20.1250.20:FF:000050">
    <property type="entry name" value="glucose-6-phosphate exchanger SLC37A2 isoform X1"/>
    <property type="match status" value="1"/>
</dbReference>
<dbReference type="FunFam" id="1.20.1250.20:FF:000028">
    <property type="entry name" value="Sugar phosphate exchanger 3 isoform 1"/>
    <property type="match status" value="1"/>
</dbReference>
<dbReference type="Gene3D" id="1.20.1250.20">
    <property type="entry name" value="MFS general substrate transporter like domains"/>
    <property type="match status" value="2"/>
</dbReference>
<dbReference type="InterPro" id="IPR011701">
    <property type="entry name" value="MFS"/>
</dbReference>
<dbReference type="InterPro" id="IPR020846">
    <property type="entry name" value="MFS_dom"/>
</dbReference>
<dbReference type="InterPro" id="IPR036259">
    <property type="entry name" value="MFS_trans_sf"/>
</dbReference>
<dbReference type="InterPro" id="IPR044740">
    <property type="entry name" value="SLC37A1_2"/>
</dbReference>
<dbReference type="InterPro" id="IPR000849">
    <property type="entry name" value="Sugar_P_transporter"/>
</dbReference>
<dbReference type="PANTHER" id="PTHR43184:SF9">
    <property type="entry name" value="GLUCOSE-6-PHOSPHATE EXCHANGER SLC37A2"/>
    <property type="match status" value="1"/>
</dbReference>
<dbReference type="PANTHER" id="PTHR43184">
    <property type="entry name" value="MAJOR FACILITATOR SUPERFAMILY TRANSPORTER 16, ISOFORM B"/>
    <property type="match status" value="1"/>
</dbReference>
<dbReference type="Pfam" id="PF07690">
    <property type="entry name" value="MFS_1"/>
    <property type="match status" value="1"/>
</dbReference>
<dbReference type="PIRSF" id="PIRSF002808">
    <property type="entry name" value="Hexose_phosphate_transp"/>
    <property type="match status" value="1"/>
</dbReference>
<dbReference type="SUPFAM" id="SSF103473">
    <property type="entry name" value="MFS general substrate transporter"/>
    <property type="match status" value="1"/>
</dbReference>
<dbReference type="PROSITE" id="PS50850">
    <property type="entry name" value="MFS"/>
    <property type="match status" value="1"/>
</dbReference>
<reference key="1">
    <citation type="journal article" date="2000" name="Biochim. Biophys. Acta">
        <title>Identification of cAMP analogue inducible genes in RAW264 macrophages.</title>
        <authorList>
            <person name="Takahashi Y."/>
            <person name="Miyata M."/>
            <person name="Zheng P."/>
            <person name="Imazato T."/>
            <person name="Horwitz A."/>
            <person name="Smith J.D."/>
        </authorList>
    </citation>
    <scope>NUCLEOTIDE SEQUENCE [MRNA] (ISOFORM 1)</scope>
    <scope>TISSUE SPECIFICITY</scope>
    <scope>INDUCTION</scope>
</reference>
<reference key="2">
    <citation type="journal article" date="2005" name="Science">
        <title>The transcriptional landscape of the mammalian genome.</title>
        <authorList>
            <person name="Carninci P."/>
            <person name="Kasukawa T."/>
            <person name="Katayama S."/>
            <person name="Gough J."/>
            <person name="Frith M.C."/>
            <person name="Maeda N."/>
            <person name="Oyama R."/>
            <person name="Ravasi T."/>
            <person name="Lenhard B."/>
            <person name="Wells C."/>
            <person name="Kodzius R."/>
            <person name="Shimokawa K."/>
            <person name="Bajic V.B."/>
            <person name="Brenner S.E."/>
            <person name="Batalov S."/>
            <person name="Forrest A.R."/>
            <person name="Zavolan M."/>
            <person name="Davis M.J."/>
            <person name="Wilming L.G."/>
            <person name="Aidinis V."/>
            <person name="Allen J.E."/>
            <person name="Ambesi-Impiombato A."/>
            <person name="Apweiler R."/>
            <person name="Aturaliya R.N."/>
            <person name="Bailey T.L."/>
            <person name="Bansal M."/>
            <person name="Baxter L."/>
            <person name="Beisel K.W."/>
            <person name="Bersano T."/>
            <person name="Bono H."/>
            <person name="Chalk A.M."/>
            <person name="Chiu K.P."/>
            <person name="Choudhary V."/>
            <person name="Christoffels A."/>
            <person name="Clutterbuck D.R."/>
            <person name="Crowe M.L."/>
            <person name="Dalla E."/>
            <person name="Dalrymple B.P."/>
            <person name="de Bono B."/>
            <person name="Della Gatta G."/>
            <person name="di Bernardo D."/>
            <person name="Down T."/>
            <person name="Engstrom P."/>
            <person name="Fagiolini M."/>
            <person name="Faulkner G."/>
            <person name="Fletcher C.F."/>
            <person name="Fukushima T."/>
            <person name="Furuno M."/>
            <person name="Futaki S."/>
            <person name="Gariboldi M."/>
            <person name="Georgii-Hemming P."/>
            <person name="Gingeras T.R."/>
            <person name="Gojobori T."/>
            <person name="Green R.E."/>
            <person name="Gustincich S."/>
            <person name="Harbers M."/>
            <person name="Hayashi Y."/>
            <person name="Hensch T.K."/>
            <person name="Hirokawa N."/>
            <person name="Hill D."/>
            <person name="Huminiecki L."/>
            <person name="Iacono M."/>
            <person name="Ikeo K."/>
            <person name="Iwama A."/>
            <person name="Ishikawa T."/>
            <person name="Jakt M."/>
            <person name="Kanapin A."/>
            <person name="Katoh M."/>
            <person name="Kawasawa Y."/>
            <person name="Kelso J."/>
            <person name="Kitamura H."/>
            <person name="Kitano H."/>
            <person name="Kollias G."/>
            <person name="Krishnan S.P."/>
            <person name="Kruger A."/>
            <person name="Kummerfeld S.K."/>
            <person name="Kurochkin I.V."/>
            <person name="Lareau L.F."/>
            <person name="Lazarevic D."/>
            <person name="Lipovich L."/>
            <person name="Liu J."/>
            <person name="Liuni S."/>
            <person name="McWilliam S."/>
            <person name="Madan Babu M."/>
            <person name="Madera M."/>
            <person name="Marchionni L."/>
            <person name="Matsuda H."/>
            <person name="Matsuzawa S."/>
            <person name="Miki H."/>
            <person name="Mignone F."/>
            <person name="Miyake S."/>
            <person name="Morris K."/>
            <person name="Mottagui-Tabar S."/>
            <person name="Mulder N."/>
            <person name="Nakano N."/>
            <person name="Nakauchi H."/>
            <person name="Ng P."/>
            <person name="Nilsson R."/>
            <person name="Nishiguchi S."/>
            <person name="Nishikawa S."/>
            <person name="Nori F."/>
            <person name="Ohara O."/>
            <person name="Okazaki Y."/>
            <person name="Orlando V."/>
            <person name="Pang K.C."/>
            <person name="Pavan W.J."/>
            <person name="Pavesi G."/>
            <person name="Pesole G."/>
            <person name="Petrovsky N."/>
            <person name="Piazza S."/>
            <person name="Reed J."/>
            <person name="Reid J.F."/>
            <person name="Ring B.Z."/>
            <person name="Ringwald M."/>
            <person name="Rost B."/>
            <person name="Ruan Y."/>
            <person name="Salzberg S.L."/>
            <person name="Sandelin A."/>
            <person name="Schneider C."/>
            <person name="Schoenbach C."/>
            <person name="Sekiguchi K."/>
            <person name="Semple C.A."/>
            <person name="Seno S."/>
            <person name="Sessa L."/>
            <person name="Sheng Y."/>
            <person name="Shibata Y."/>
            <person name="Shimada H."/>
            <person name="Shimada K."/>
            <person name="Silva D."/>
            <person name="Sinclair B."/>
            <person name="Sperling S."/>
            <person name="Stupka E."/>
            <person name="Sugiura K."/>
            <person name="Sultana R."/>
            <person name="Takenaka Y."/>
            <person name="Taki K."/>
            <person name="Tammoja K."/>
            <person name="Tan S.L."/>
            <person name="Tang S."/>
            <person name="Taylor M.S."/>
            <person name="Tegner J."/>
            <person name="Teichmann S.A."/>
            <person name="Ueda H.R."/>
            <person name="van Nimwegen E."/>
            <person name="Verardo R."/>
            <person name="Wei C.L."/>
            <person name="Yagi K."/>
            <person name="Yamanishi H."/>
            <person name="Zabarovsky E."/>
            <person name="Zhu S."/>
            <person name="Zimmer A."/>
            <person name="Hide W."/>
            <person name="Bult C."/>
            <person name="Grimmond S.M."/>
            <person name="Teasdale R.D."/>
            <person name="Liu E.T."/>
            <person name="Brusic V."/>
            <person name="Quackenbush J."/>
            <person name="Wahlestedt C."/>
            <person name="Mattick J.S."/>
            <person name="Hume D.A."/>
            <person name="Kai C."/>
            <person name="Sasaki D."/>
            <person name="Tomaru Y."/>
            <person name="Fukuda S."/>
            <person name="Kanamori-Katayama M."/>
            <person name="Suzuki M."/>
            <person name="Aoki J."/>
            <person name="Arakawa T."/>
            <person name="Iida J."/>
            <person name="Imamura K."/>
            <person name="Itoh M."/>
            <person name="Kato T."/>
            <person name="Kawaji H."/>
            <person name="Kawagashira N."/>
            <person name="Kawashima T."/>
            <person name="Kojima M."/>
            <person name="Kondo S."/>
            <person name="Konno H."/>
            <person name="Nakano K."/>
            <person name="Ninomiya N."/>
            <person name="Nishio T."/>
            <person name="Okada M."/>
            <person name="Plessy C."/>
            <person name="Shibata K."/>
            <person name="Shiraki T."/>
            <person name="Suzuki S."/>
            <person name="Tagami M."/>
            <person name="Waki K."/>
            <person name="Watahiki A."/>
            <person name="Okamura-Oho Y."/>
            <person name="Suzuki H."/>
            <person name="Kawai J."/>
            <person name="Hayashizaki Y."/>
        </authorList>
    </citation>
    <scope>NUCLEOTIDE SEQUENCE [LARGE SCALE MRNA] (ISOFORMS 1 AND 2)</scope>
    <source>
        <strain>C57BL/6J</strain>
        <tissue>Bone</tissue>
        <tissue>Skin</tissue>
        <tissue>Thymus</tissue>
    </source>
</reference>
<reference key="3">
    <citation type="journal article" date="2004" name="Genome Res.">
        <title>The status, quality, and expansion of the NIH full-length cDNA project: the Mammalian Gene Collection (MGC).</title>
        <authorList>
            <consortium name="The MGC Project Team"/>
        </authorList>
    </citation>
    <scope>NUCLEOTIDE SEQUENCE [LARGE SCALE MRNA] (ISOFORMS 1 AND 2)</scope>
    <source>
        <strain>FVB/N</strain>
        <tissue>Heart</tissue>
        <tissue>Lung</tissue>
        <tissue>Salivary gland</tissue>
    </source>
</reference>
<reference key="4">
    <citation type="submission" date="2005-02" db="EMBL/GenBank/DDBJ databases">
        <title>Prediction of the coding sequences of mouse homologues of KIAA gene. The complete nucleotide sequences of mouse KIAA-homologous cDNAs identified by screening of terminal sequences of cDNA clones randomly sampled from size-fractionated libraries.</title>
        <authorList>
            <person name="Okazaki N."/>
            <person name="Kikuno R.F."/>
            <person name="Ohara R."/>
            <person name="Inamoto S."/>
            <person name="Nagase T."/>
            <person name="Ohara O."/>
            <person name="Koga H."/>
        </authorList>
    </citation>
    <scope>NUCLEOTIDE SEQUENCE [LARGE SCALE MRNA] OF 60-501 (ISOFORM 2)</scope>
    <source>
        <tissue>Embryonic intestine</tissue>
    </source>
</reference>
<reference key="5">
    <citation type="journal article" date="2009" name="Immunity">
        <title>The phagosomal proteome in interferon-gamma-activated macrophages.</title>
        <authorList>
            <person name="Trost M."/>
            <person name="English L."/>
            <person name="Lemieux S."/>
            <person name="Courcelles M."/>
            <person name="Desjardins M."/>
            <person name="Thibault P."/>
        </authorList>
    </citation>
    <scope>IDENTIFICATION BY MASS SPECTROMETRY [LARGE SCALE ANALYSIS]</scope>
</reference>
<reference key="6">
    <citation type="journal article" date="2010" name="Cell">
        <title>A tissue-specific atlas of mouse protein phosphorylation and expression.</title>
        <authorList>
            <person name="Huttlin E.L."/>
            <person name="Jedrychowski M.P."/>
            <person name="Elias J.E."/>
            <person name="Goswami T."/>
            <person name="Rad R."/>
            <person name="Beausoleil S.A."/>
            <person name="Villen J."/>
            <person name="Haas W."/>
            <person name="Sowa M.E."/>
            <person name="Gygi S.P."/>
        </authorList>
    </citation>
    <scope>IDENTIFICATION BY MASS SPECTROMETRY [LARGE SCALE ANALYSIS]</scope>
    <source>
        <tissue>Spleen</tissue>
    </source>
</reference>
<feature type="chain" id="PRO_0000308323" description="Glucose-6-phosphate exchanger SLC37A2">
    <location>
        <begin position="1"/>
        <end position="501"/>
    </location>
</feature>
<feature type="transmembrane region" description="Helical" evidence="2">
    <location>
        <begin position="19"/>
        <end position="39"/>
    </location>
</feature>
<feature type="transmembrane region" description="Helical" evidence="2">
    <location>
        <begin position="88"/>
        <end position="108"/>
    </location>
</feature>
<feature type="transmembrane region" description="Helical" evidence="2">
    <location>
        <begin position="118"/>
        <end position="140"/>
    </location>
</feature>
<feature type="transmembrane region" description="Helical" evidence="2">
    <location>
        <begin position="142"/>
        <end position="164"/>
    </location>
</feature>
<feature type="transmembrane region" description="Helical" evidence="2">
    <location>
        <begin position="179"/>
        <end position="199"/>
    </location>
</feature>
<feature type="transmembrane region" description="Helical" evidence="2">
    <location>
        <begin position="210"/>
        <end position="230"/>
    </location>
</feature>
<feature type="transmembrane region" description="Helical" evidence="2">
    <location>
        <begin position="303"/>
        <end position="323"/>
    </location>
</feature>
<feature type="transmembrane region" description="Helical" evidence="2">
    <location>
        <begin position="334"/>
        <end position="354"/>
    </location>
</feature>
<feature type="transmembrane region" description="Helical" evidence="2">
    <location>
        <begin position="362"/>
        <end position="382"/>
    </location>
</feature>
<feature type="transmembrane region" description="Helical" evidence="2">
    <location>
        <begin position="391"/>
        <end position="411"/>
    </location>
</feature>
<feature type="transmembrane region" description="Helical" evidence="2">
    <location>
        <begin position="434"/>
        <end position="454"/>
    </location>
</feature>
<feature type="transmembrane region" description="Helical" evidence="2">
    <location>
        <begin position="462"/>
        <end position="482"/>
    </location>
</feature>
<feature type="region of interest" description="Disordered" evidence="3">
    <location>
        <begin position="240"/>
        <end position="266"/>
    </location>
</feature>
<feature type="compositionally biased region" description="Basic and acidic residues" evidence="3">
    <location>
        <begin position="240"/>
        <end position="252"/>
    </location>
</feature>
<feature type="glycosylation site" description="N-linked (GlcNAc...) asparagine" evidence="2">
    <location>
        <position position="53"/>
    </location>
</feature>
<feature type="glycosylation site" description="N-linked (GlcNAc...) asparagine" evidence="2">
    <location>
        <position position="62"/>
    </location>
</feature>
<feature type="glycosylation site" description="N-linked (GlcNAc...) asparagine" evidence="2">
    <location>
        <position position="68"/>
    </location>
</feature>
<feature type="splice variant" id="VSP_028964" description="In isoform 2." evidence="6 7 8">
    <original>YKQI</original>
    <variation>SSLALTHPR</variation>
    <location>
        <begin position="498"/>
        <end position="501"/>
    </location>
</feature>
<feature type="sequence conflict" description="In Ref. 2; BAC37639." evidence="9" ref="2">
    <original>L</original>
    <variation>V</variation>
    <location>
        <position position="339"/>
    </location>
</feature>
<feature type="sequence conflict" description="In Ref. 3; AAH63326." evidence="9" ref="3">
    <original>K</original>
    <variation>E</variation>
    <location>
        <position position="423"/>
    </location>
</feature>
<sequence length="501" mass="55073">MRSSLAPGVWFLRAFSRDSWFRGFILLLTFLIYACYHMSRKPISIVKSRLHQNCSEMVRPVNDTHDLNDTTWCSWSPFDKDDYKELLGAVDNAFLVAYAIGMFISGIFGERLPLRYYLSAGMVLSGLFTSLFGLGYFWNIHMLWYFVLIQICNGLVQTTGWPSVVTCVGNWFGKGKRGFIMGIWNSHTSVGNILGSLIAGVWVNQHWGLSFIVPGIITAIMGVITFLFLIEYPEDVDCTPPRHHDDPEKEQDNPEDPVNSPYSSRESNVDIAASSSKEQGPEPEAISFLGALRIPGVIEFSLCLLFAKLVSYTFLYWLPLYIFNVAHFSAKEAGDLSTLFDVGGIIGGIMAGLISDYTNSRATTCCIMLILAAPMMFLYNYIGQNGITSSIVMLIICGVLVNGPYALITTAVSADLGTHESLKGNAKALSTVTAIIDGTGSIGAALGPLLAGLISPTGWNNVFYMLISADVLACLLLCRLVYKEILAWKTACGRSSGYKQI</sequence>
<proteinExistence type="evidence at protein level"/>
<evidence type="ECO:0000250" key="1">
    <source>
        <dbReference type="UniProtKB" id="Q8TED4"/>
    </source>
</evidence>
<evidence type="ECO:0000255" key="2"/>
<evidence type="ECO:0000256" key="3">
    <source>
        <dbReference type="SAM" id="MobiDB-lite"/>
    </source>
</evidence>
<evidence type="ECO:0000269" key="4">
    <source>
    </source>
</evidence>
<evidence type="ECO:0000303" key="5">
    <source>
    </source>
</evidence>
<evidence type="ECO:0000303" key="6">
    <source>
    </source>
</evidence>
<evidence type="ECO:0000303" key="7">
    <source>
    </source>
</evidence>
<evidence type="ECO:0000303" key="8">
    <source ref="4"/>
</evidence>
<evidence type="ECO:0000305" key="9"/>
<evidence type="ECO:0000312" key="10">
    <source>
        <dbReference type="MGI" id="MGI:1929693"/>
    </source>
</evidence>